<organism>
    <name type="scientific">Salmonella typhi</name>
    <dbReference type="NCBI Taxonomy" id="90370"/>
    <lineage>
        <taxon>Bacteria</taxon>
        <taxon>Pseudomonadati</taxon>
        <taxon>Pseudomonadota</taxon>
        <taxon>Gammaproteobacteria</taxon>
        <taxon>Enterobacterales</taxon>
        <taxon>Enterobacteriaceae</taxon>
        <taxon>Salmonella</taxon>
    </lineage>
</organism>
<dbReference type="EMBL" id="AL513382">
    <property type="protein sequence ID" value="CAD07585.1"/>
    <property type="molecule type" value="Genomic_DNA"/>
</dbReference>
<dbReference type="EMBL" id="AE014613">
    <property type="protein sequence ID" value="AAO68217.1"/>
    <property type="molecule type" value="Genomic_DNA"/>
</dbReference>
<dbReference type="RefSeq" id="NP_456895.1">
    <property type="nucleotide sequence ID" value="NC_003198.1"/>
</dbReference>
<dbReference type="RefSeq" id="WP_000965498.1">
    <property type="nucleotide sequence ID" value="NZ_WSUR01000029.1"/>
</dbReference>
<dbReference type="SMR" id="P0A2J0"/>
<dbReference type="STRING" id="220341.gene:17586482"/>
<dbReference type="KEGG" id="stt:t0511"/>
<dbReference type="KEGG" id="sty:STY2583"/>
<dbReference type="PATRIC" id="fig|220341.7.peg.2615"/>
<dbReference type="eggNOG" id="COG4215">
    <property type="taxonomic scope" value="Bacteria"/>
</dbReference>
<dbReference type="HOGENOM" id="CLU_019602_1_4_6"/>
<dbReference type="OMA" id="YYILPRQ"/>
<dbReference type="OrthoDB" id="9815029at2"/>
<dbReference type="Proteomes" id="UP000000541">
    <property type="component" value="Chromosome"/>
</dbReference>
<dbReference type="Proteomes" id="UP000002670">
    <property type="component" value="Chromosome"/>
</dbReference>
<dbReference type="GO" id="GO:0043190">
    <property type="term" value="C:ATP-binding cassette (ABC) transporter complex"/>
    <property type="evidence" value="ECO:0007669"/>
    <property type="project" value="InterPro"/>
</dbReference>
<dbReference type="GO" id="GO:0022857">
    <property type="term" value="F:transmembrane transporter activity"/>
    <property type="evidence" value="ECO:0007669"/>
    <property type="project" value="InterPro"/>
</dbReference>
<dbReference type="GO" id="GO:0006865">
    <property type="term" value="P:amino acid transport"/>
    <property type="evidence" value="ECO:0007669"/>
    <property type="project" value="UniProtKB-KW"/>
</dbReference>
<dbReference type="CDD" id="cd06261">
    <property type="entry name" value="TM_PBP2"/>
    <property type="match status" value="1"/>
</dbReference>
<dbReference type="FunFam" id="1.10.3720.10:FF:000020">
    <property type="entry name" value="Histidine ABC transporter permease HisQ"/>
    <property type="match status" value="1"/>
</dbReference>
<dbReference type="Gene3D" id="1.10.3720.10">
    <property type="entry name" value="MetI-like"/>
    <property type="match status" value="1"/>
</dbReference>
<dbReference type="InterPro" id="IPR010065">
    <property type="entry name" value="AA_ABC_transptr_permease_3TM"/>
</dbReference>
<dbReference type="InterPro" id="IPR051613">
    <property type="entry name" value="ABC_transp_permease_HisMQ"/>
</dbReference>
<dbReference type="InterPro" id="IPR000515">
    <property type="entry name" value="MetI-like"/>
</dbReference>
<dbReference type="InterPro" id="IPR035906">
    <property type="entry name" value="MetI-like_sf"/>
</dbReference>
<dbReference type="NCBIfam" id="TIGR01726">
    <property type="entry name" value="HEQRo_perm_3TM"/>
    <property type="match status" value="1"/>
</dbReference>
<dbReference type="NCBIfam" id="NF011714">
    <property type="entry name" value="PRK15135.1"/>
    <property type="match status" value="1"/>
</dbReference>
<dbReference type="PANTHER" id="PTHR30133">
    <property type="entry name" value="CATIONIC AMINO ACID TRANSPORTER, MEMBRANE COMPONENT"/>
    <property type="match status" value="1"/>
</dbReference>
<dbReference type="PANTHER" id="PTHR30133:SF1">
    <property type="entry name" value="HISTIDINE TRANSPORT SYSTEM PERMEASE PROTEIN HISQ"/>
    <property type="match status" value="1"/>
</dbReference>
<dbReference type="Pfam" id="PF00528">
    <property type="entry name" value="BPD_transp_1"/>
    <property type="match status" value="1"/>
</dbReference>
<dbReference type="SUPFAM" id="SSF161098">
    <property type="entry name" value="MetI-like"/>
    <property type="match status" value="1"/>
</dbReference>
<dbReference type="PROSITE" id="PS50928">
    <property type="entry name" value="ABC_TM1"/>
    <property type="match status" value="1"/>
</dbReference>
<reference key="1">
    <citation type="journal article" date="2001" name="Nature">
        <title>Complete genome sequence of a multiple drug resistant Salmonella enterica serovar Typhi CT18.</title>
        <authorList>
            <person name="Parkhill J."/>
            <person name="Dougan G."/>
            <person name="James K.D."/>
            <person name="Thomson N.R."/>
            <person name="Pickard D."/>
            <person name="Wain J."/>
            <person name="Churcher C.M."/>
            <person name="Mungall K.L."/>
            <person name="Bentley S.D."/>
            <person name="Holden M.T.G."/>
            <person name="Sebaihia M."/>
            <person name="Baker S."/>
            <person name="Basham D."/>
            <person name="Brooks K."/>
            <person name="Chillingworth T."/>
            <person name="Connerton P."/>
            <person name="Cronin A."/>
            <person name="Davis P."/>
            <person name="Davies R.M."/>
            <person name="Dowd L."/>
            <person name="White N."/>
            <person name="Farrar J."/>
            <person name="Feltwell T."/>
            <person name="Hamlin N."/>
            <person name="Haque A."/>
            <person name="Hien T.T."/>
            <person name="Holroyd S."/>
            <person name="Jagels K."/>
            <person name="Krogh A."/>
            <person name="Larsen T.S."/>
            <person name="Leather S."/>
            <person name="Moule S."/>
            <person name="O'Gaora P."/>
            <person name="Parry C."/>
            <person name="Quail M.A."/>
            <person name="Rutherford K.M."/>
            <person name="Simmonds M."/>
            <person name="Skelton J."/>
            <person name="Stevens K."/>
            <person name="Whitehead S."/>
            <person name="Barrell B.G."/>
        </authorList>
    </citation>
    <scope>NUCLEOTIDE SEQUENCE [LARGE SCALE GENOMIC DNA]</scope>
    <source>
        <strain>CT18</strain>
    </source>
</reference>
<reference key="2">
    <citation type="journal article" date="2003" name="J. Bacteriol.">
        <title>Comparative genomics of Salmonella enterica serovar Typhi strains Ty2 and CT18.</title>
        <authorList>
            <person name="Deng W."/>
            <person name="Liou S.-R."/>
            <person name="Plunkett G. III"/>
            <person name="Mayhew G.F."/>
            <person name="Rose D.J."/>
            <person name="Burland V."/>
            <person name="Kodoyianni V."/>
            <person name="Schwartz D.C."/>
            <person name="Blattner F.R."/>
        </authorList>
    </citation>
    <scope>NUCLEOTIDE SEQUENCE [LARGE SCALE GENOMIC DNA]</scope>
    <source>
        <strain>ATCC 700931 / Ty2</strain>
    </source>
</reference>
<feature type="chain" id="PRO_0000060051" description="Histidine/lysine/arginine/ornithine transport system permease protein HisQ">
    <location>
        <begin position="1"/>
        <end position="228"/>
    </location>
</feature>
<feature type="topological domain" description="Periplasmic" evidence="1">
    <location>
        <begin position="1"/>
        <end position="12"/>
    </location>
</feature>
<feature type="transmembrane region" description="Helical" evidence="2">
    <location>
        <begin position="13"/>
        <end position="33"/>
    </location>
</feature>
<feature type="topological domain" description="Cytoplasmic" evidence="1">
    <location>
        <begin position="34"/>
        <end position="58"/>
    </location>
</feature>
<feature type="transmembrane region" description="Helical" evidence="2">
    <location>
        <begin position="59"/>
        <end position="79"/>
    </location>
</feature>
<feature type="topological domain" description="Periplasmic" evidence="1">
    <location>
        <begin position="80"/>
        <end position="87"/>
    </location>
</feature>
<feature type="transmembrane region" description="Helical" evidence="2">
    <location>
        <begin position="88"/>
        <end position="108"/>
    </location>
</feature>
<feature type="topological domain" description="Cytoplasmic" evidence="1">
    <location>
        <begin position="109"/>
        <end position="152"/>
    </location>
</feature>
<feature type="transmembrane region" description="Helical" evidence="2">
    <location>
        <begin position="153"/>
        <end position="173"/>
    </location>
</feature>
<feature type="topological domain" description="Periplasmic" evidence="1">
    <location>
        <begin position="174"/>
        <end position="194"/>
    </location>
</feature>
<feature type="transmembrane region" description="Helical" evidence="2">
    <location>
        <begin position="195"/>
        <end position="215"/>
    </location>
</feature>
<feature type="topological domain" description="Cytoplasmic" evidence="1">
    <location>
        <begin position="216"/>
        <end position="228"/>
    </location>
</feature>
<feature type="domain" description="ABC transmembrane type-1" evidence="3">
    <location>
        <begin position="13"/>
        <end position="212"/>
    </location>
</feature>
<keyword id="KW-0029">Amino-acid transport</keyword>
<keyword id="KW-0997">Cell inner membrane</keyword>
<keyword id="KW-1003">Cell membrane</keyword>
<keyword id="KW-0472">Membrane</keyword>
<keyword id="KW-0812">Transmembrane</keyword>
<keyword id="KW-1133">Transmembrane helix</keyword>
<keyword id="KW-0813">Transport</keyword>
<sequence>MLYGFSGVILQGAIVTLELALSSVVLAVLIGLVGAGAKLSQNRVTGLIFEGYTTLIRGVPDLVLMLLIFYGLQIALNVVTDSLGIDQIDIDPMVAGIITLGFIYGAYFTETFRGAFMAVPKGHIEAATAFGFTHGQTFRRIMFPAMMRYALPGIGNNWQVILKATALVSLLGLEDVVKATQLAGKSTWEPFYFAVVCGLIYLVFTTVSNGVLLLLERRYSVGVKRADL</sequence>
<gene>
    <name type="primary">hisQ</name>
    <name type="ordered locus">STY2583</name>
    <name type="ordered locus">t0511</name>
</gene>
<comment type="function">
    <text evidence="1">Part of the ABC transporter complex HisPMQJ involved in histidine transport. Is also part of the ABC transporter complex HisPMQ-ArgT involved in lysine/arginine/ornithine transport. Probably responsible for the translocation of the substrate across the membrane.</text>
</comment>
<comment type="subunit">
    <text evidence="1">The HisPMQJ complex is composed of two ATP-binding proteins (HisP), two transmembrane proteins (HisM and HisQ) and a solute-binding protein (HisJ). The HisPMQ-ArgT complex is composed of two ATP-binding proteins (HisP), two transmembrane proteins (HisM and HisQ) and a solute-binding protein (ArgT).</text>
</comment>
<comment type="subcellular location">
    <subcellularLocation>
        <location evidence="1">Cell inner membrane</location>
        <topology evidence="1">Multi-pass membrane protein</topology>
    </subcellularLocation>
</comment>
<comment type="similarity">
    <text evidence="4">Belongs to the binding-protein-dependent transport system permease family. HisMQ subfamily.</text>
</comment>
<proteinExistence type="inferred from homology"/>
<evidence type="ECO:0000250" key="1">
    <source>
        <dbReference type="UniProtKB" id="P0A2I9"/>
    </source>
</evidence>
<evidence type="ECO:0000255" key="2"/>
<evidence type="ECO:0000255" key="3">
    <source>
        <dbReference type="PROSITE-ProRule" id="PRU00441"/>
    </source>
</evidence>
<evidence type="ECO:0000305" key="4"/>
<accession>P0A2J0</accession>
<accession>P02913</accession>
<name>HISQ_SALTI</name>
<protein>
    <recommendedName>
        <fullName evidence="1">Histidine/lysine/arginine/ornithine transport system permease protein HisQ</fullName>
    </recommendedName>
</protein>